<organism>
    <name type="scientific">Dictyoglomus thermophilum (strain ATCC 35947 / DSM 3960 / H-6-12)</name>
    <dbReference type="NCBI Taxonomy" id="309799"/>
    <lineage>
        <taxon>Bacteria</taxon>
        <taxon>Pseudomonadati</taxon>
        <taxon>Dictyoglomota</taxon>
        <taxon>Dictyoglomia</taxon>
        <taxon>Dictyoglomales</taxon>
        <taxon>Dictyoglomaceae</taxon>
        <taxon>Dictyoglomus</taxon>
    </lineage>
</organism>
<keyword id="KW-0028">Amino-acid biosynthesis</keyword>
<keyword id="KW-0057">Aromatic amino acid biosynthesis</keyword>
<keyword id="KW-0456">Lyase</keyword>
<keyword id="KW-0822">Tryptophan biosynthesis</keyword>
<dbReference type="EC" id="4.2.1.20" evidence="1"/>
<dbReference type="EMBL" id="CP001146">
    <property type="protein sequence ID" value="ACI19187.1"/>
    <property type="molecule type" value="Genomic_DNA"/>
</dbReference>
<dbReference type="RefSeq" id="WP_012547819.1">
    <property type="nucleotide sequence ID" value="NC_011297.1"/>
</dbReference>
<dbReference type="SMR" id="B5YD09"/>
<dbReference type="STRING" id="309799.DICTH_0535"/>
<dbReference type="PaxDb" id="309799-DICTH_0535"/>
<dbReference type="KEGG" id="dth:DICTH_0535"/>
<dbReference type="eggNOG" id="COG0159">
    <property type="taxonomic scope" value="Bacteria"/>
</dbReference>
<dbReference type="HOGENOM" id="CLU_016734_0_0_0"/>
<dbReference type="OrthoDB" id="9804578at2"/>
<dbReference type="UniPathway" id="UPA00035">
    <property type="reaction ID" value="UER00044"/>
</dbReference>
<dbReference type="Proteomes" id="UP000001733">
    <property type="component" value="Chromosome"/>
</dbReference>
<dbReference type="GO" id="GO:0005829">
    <property type="term" value="C:cytosol"/>
    <property type="evidence" value="ECO:0007669"/>
    <property type="project" value="TreeGrafter"/>
</dbReference>
<dbReference type="GO" id="GO:0004834">
    <property type="term" value="F:tryptophan synthase activity"/>
    <property type="evidence" value="ECO:0007669"/>
    <property type="project" value="UniProtKB-UniRule"/>
</dbReference>
<dbReference type="CDD" id="cd04724">
    <property type="entry name" value="Tryptophan_synthase_alpha"/>
    <property type="match status" value="1"/>
</dbReference>
<dbReference type="Gene3D" id="3.20.20.70">
    <property type="entry name" value="Aldolase class I"/>
    <property type="match status" value="1"/>
</dbReference>
<dbReference type="HAMAP" id="MF_00131">
    <property type="entry name" value="Trp_synth_alpha"/>
    <property type="match status" value="1"/>
</dbReference>
<dbReference type="InterPro" id="IPR013785">
    <property type="entry name" value="Aldolase_TIM"/>
</dbReference>
<dbReference type="InterPro" id="IPR011060">
    <property type="entry name" value="RibuloseP-bd_barrel"/>
</dbReference>
<dbReference type="InterPro" id="IPR018204">
    <property type="entry name" value="Trp_synthase_alpha_AS"/>
</dbReference>
<dbReference type="InterPro" id="IPR002028">
    <property type="entry name" value="Trp_synthase_suA"/>
</dbReference>
<dbReference type="NCBIfam" id="TIGR00262">
    <property type="entry name" value="trpA"/>
    <property type="match status" value="1"/>
</dbReference>
<dbReference type="PANTHER" id="PTHR43406:SF1">
    <property type="entry name" value="TRYPTOPHAN SYNTHASE ALPHA CHAIN, CHLOROPLASTIC"/>
    <property type="match status" value="1"/>
</dbReference>
<dbReference type="PANTHER" id="PTHR43406">
    <property type="entry name" value="TRYPTOPHAN SYNTHASE, ALPHA CHAIN"/>
    <property type="match status" value="1"/>
</dbReference>
<dbReference type="Pfam" id="PF00290">
    <property type="entry name" value="Trp_syntA"/>
    <property type="match status" value="1"/>
</dbReference>
<dbReference type="SUPFAM" id="SSF51366">
    <property type="entry name" value="Ribulose-phoshate binding barrel"/>
    <property type="match status" value="1"/>
</dbReference>
<dbReference type="PROSITE" id="PS00167">
    <property type="entry name" value="TRP_SYNTHASE_ALPHA"/>
    <property type="match status" value="1"/>
</dbReference>
<name>TRPA_DICT6</name>
<protein>
    <recommendedName>
        <fullName evidence="1">Tryptophan synthase alpha chain</fullName>
        <ecNumber evidence="1">4.2.1.20</ecNumber>
    </recommendedName>
</protein>
<reference key="1">
    <citation type="journal article" date="2014" name="Genome Announc.">
        <title>Complete Genome Sequence of the Extreme Thermophile Dictyoglomus thermophilum H-6-12.</title>
        <authorList>
            <person name="Coil D.A."/>
            <person name="Badger J.H."/>
            <person name="Forberger H.C."/>
            <person name="Riggs F."/>
            <person name="Madupu R."/>
            <person name="Fedorova N."/>
            <person name="Ward N."/>
            <person name="Robb F.T."/>
            <person name="Eisen J.A."/>
        </authorList>
    </citation>
    <scope>NUCLEOTIDE SEQUENCE [LARGE SCALE GENOMIC DNA]</scope>
    <source>
        <strain>ATCC 35947 / DSM 3960 / H-6-12</strain>
    </source>
</reference>
<sequence length="253" mass="28840">MANLLEKFKNRDKSLLFVPFFVSGFPDFDFLEKFLFKNKDKIDILELGVPFSDPVADGPILQEINYRAMVKGVNLNNTLDWLLDSGITKKIDVILLLYFNLIQNKLEEKLKRFKEVGIKGLVIPDLPLEEAEKLIPLFNEHNLDLILFISPTTREERIRKILDIAPSFLYCISVKGVTGERDRLPEEGVAFISRVKKETNKPLVWGFGLGSSYQINSLKGLVDGVIVGSAIGKRLLNNEDIQDYFDELYKATL</sequence>
<feature type="chain" id="PRO_1000095712" description="Tryptophan synthase alpha chain">
    <location>
        <begin position="1"/>
        <end position="253"/>
    </location>
</feature>
<feature type="active site" description="Proton acceptor" evidence="1">
    <location>
        <position position="46"/>
    </location>
</feature>
<feature type="active site" description="Proton acceptor" evidence="1">
    <location>
        <position position="57"/>
    </location>
</feature>
<proteinExistence type="inferred from homology"/>
<accession>B5YD09</accession>
<evidence type="ECO:0000255" key="1">
    <source>
        <dbReference type="HAMAP-Rule" id="MF_00131"/>
    </source>
</evidence>
<gene>
    <name evidence="1" type="primary">trpA</name>
    <name type="ordered locus">DICTH_0535</name>
</gene>
<comment type="function">
    <text evidence="1">The alpha subunit is responsible for the aldol cleavage of indoleglycerol phosphate to indole and glyceraldehyde 3-phosphate.</text>
</comment>
<comment type="catalytic activity">
    <reaction evidence="1">
        <text>(1S,2R)-1-C-(indol-3-yl)glycerol 3-phosphate + L-serine = D-glyceraldehyde 3-phosphate + L-tryptophan + H2O</text>
        <dbReference type="Rhea" id="RHEA:10532"/>
        <dbReference type="ChEBI" id="CHEBI:15377"/>
        <dbReference type="ChEBI" id="CHEBI:33384"/>
        <dbReference type="ChEBI" id="CHEBI:57912"/>
        <dbReference type="ChEBI" id="CHEBI:58866"/>
        <dbReference type="ChEBI" id="CHEBI:59776"/>
        <dbReference type="EC" id="4.2.1.20"/>
    </reaction>
</comment>
<comment type="pathway">
    <text evidence="1">Amino-acid biosynthesis; L-tryptophan biosynthesis; L-tryptophan from chorismate: step 5/5.</text>
</comment>
<comment type="subunit">
    <text evidence="1">Tetramer of two alpha and two beta chains.</text>
</comment>
<comment type="similarity">
    <text evidence="1">Belongs to the TrpA family.</text>
</comment>